<feature type="chain" id="PRO_0000057071" description="Phosphatase NudJ">
    <location>
        <begin position="1"/>
        <end position="153"/>
    </location>
</feature>
<feature type="domain" description="Nudix hydrolase" evidence="2">
    <location>
        <begin position="3"/>
        <end position="131"/>
    </location>
</feature>
<feature type="short sequence motif" description="Nudix box">
    <location>
        <begin position="36"/>
        <end position="57"/>
    </location>
</feature>
<keyword id="KW-0378">Hydrolase</keyword>
<keyword id="KW-0460">Magnesium</keyword>
<keyword id="KW-1185">Reference proteome</keyword>
<name>NUDJ_ECOL6</name>
<evidence type="ECO:0000250" key="1"/>
<evidence type="ECO:0000255" key="2">
    <source>
        <dbReference type="PROSITE-ProRule" id="PRU00794"/>
    </source>
</evidence>
<evidence type="ECO:0000305" key="3"/>
<protein>
    <recommendedName>
        <fullName>Phosphatase NudJ</fullName>
        <ecNumber>3.6.1.-</ecNumber>
    </recommendedName>
</protein>
<accession>P0AEI7</accession>
<accession>P75965</accession>
<dbReference type="EC" id="3.6.1.-"/>
<dbReference type="EMBL" id="AE014075">
    <property type="protein sequence ID" value="AAN79982.1"/>
    <property type="molecule type" value="Genomic_DNA"/>
</dbReference>
<dbReference type="RefSeq" id="WP_000476093.1">
    <property type="nucleotide sequence ID" value="NZ_CP051263.1"/>
</dbReference>
<dbReference type="SMR" id="P0AEI7"/>
<dbReference type="STRING" id="199310.c1513"/>
<dbReference type="GeneID" id="75203720"/>
<dbReference type="KEGG" id="ecc:c1513"/>
<dbReference type="eggNOG" id="COG1051">
    <property type="taxonomic scope" value="Bacteria"/>
</dbReference>
<dbReference type="HOGENOM" id="CLU_037162_6_1_6"/>
<dbReference type="BioCyc" id="ECOL199310:C1513-MONOMER"/>
<dbReference type="Proteomes" id="UP000001410">
    <property type="component" value="Chromosome"/>
</dbReference>
<dbReference type="GO" id="GO:0017110">
    <property type="term" value="F:nucleoside diphosphate phosphatase activity"/>
    <property type="evidence" value="ECO:0007669"/>
    <property type="project" value="InterPro"/>
</dbReference>
<dbReference type="GO" id="GO:0017111">
    <property type="term" value="F:ribonucleoside triphosphate phosphatase activity"/>
    <property type="evidence" value="ECO:0007669"/>
    <property type="project" value="InterPro"/>
</dbReference>
<dbReference type="GO" id="GO:0004787">
    <property type="term" value="F:thiamine diphosphate phosphatase activity"/>
    <property type="evidence" value="ECO:0007669"/>
    <property type="project" value="InterPro"/>
</dbReference>
<dbReference type="CDD" id="cd03675">
    <property type="entry name" value="NUDIX_Hydrolase"/>
    <property type="match status" value="1"/>
</dbReference>
<dbReference type="FunFam" id="3.90.79.10:FF:000017">
    <property type="entry name" value="Phosphatase NudJ"/>
    <property type="match status" value="1"/>
</dbReference>
<dbReference type="Gene3D" id="3.90.79.10">
    <property type="entry name" value="Nucleoside Triphosphate Pyrophosphohydrolase"/>
    <property type="match status" value="1"/>
</dbReference>
<dbReference type="InterPro" id="IPR020476">
    <property type="entry name" value="Nudix_hydrolase"/>
</dbReference>
<dbReference type="InterPro" id="IPR015797">
    <property type="entry name" value="NUDIX_hydrolase-like_dom_sf"/>
</dbReference>
<dbReference type="InterPro" id="IPR020084">
    <property type="entry name" value="NUDIX_hydrolase_CS"/>
</dbReference>
<dbReference type="InterPro" id="IPR000086">
    <property type="entry name" value="NUDIX_hydrolase_dom"/>
</dbReference>
<dbReference type="InterPro" id="IPR033713">
    <property type="entry name" value="NudJ"/>
</dbReference>
<dbReference type="PANTHER" id="PTHR43222">
    <property type="entry name" value="NUDIX HYDROLASE 23"/>
    <property type="match status" value="1"/>
</dbReference>
<dbReference type="PANTHER" id="PTHR43222:SF11">
    <property type="entry name" value="PHOSPHATASE NUDJ"/>
    <property type="match status" value="1"/>
</dbReference>
<dbReference type="Pfam" id="PF00293">
    <property type="entry name" value="NUDIX"/>
    <property type="match status" value="1"/>
</dbReference>
<dbReference type="PRINTS" id="PR00502">
    <property type="entry name" value="NUDIXFAMILY"/>
</dbReference>
<dbReference type="SUPFAM" id="SSF55811">
    <property type="entry name" value="Nudix"/>
    <property type="match status" value="1"/>
</dbReference>
<dbReference type="PROSITE" id="PS51462">
    <property type="entry name" value="NUDIX"/>
    <property type="match status" value="1"/>
</dbReference>
<dbReference type="PROSITE" id="PS00893">
    <property type="entry name" value="NUDIX_BOX"/>
    <property type="match status" value="1"/>
</dbReference>
<gene>
    <name type="primary">nudJ</name>
    <name type="ordered locus">c1513</name>
</gene>
<reference key="1">
    <citation type="journal article" date="2002" name="Proc. Natl. Acad. Sci. U.S.A.">
        <title>Extensive mosaic structure revealed by the complete genome sequence of uropathogenic Escherichia coli.</title>
        <authorList>
            <person name="Welch R.A."/>
            <person name="Burland V."/>
            <person name="Plunkett G. III"/>
            <person name="Redford P."/>
            <person name="Roesch P."/>
            <person name="Rasko D."/>
            <person name="Buckles E.L."/>
            <person name="Liou S.-R."/>
            <person name="Boutin A."/>
            <person name="Hackett J."/>
            <person name="Stroud D."/>
            <person name="Mayhew G.F."/>
            <person name="Rose D.J."/>
            <person name="Zhou S."/>
            <person name="Schwartz D.C."/>
            <person name="Perna N.T."/>
            <person name="Mobley H.L.T."/>
            <person name="Donnenberg M.S."/>
            <person name="Blattner F.R."/>
        </authorList>
    </citation>
    <scope>NUCLEOTIDE SEQUENCE [LARGE SCALE GENOMIC DNA]</scope>
    <source>
        <strain>CFT073 / ATCC 700928 / UPEC</strain>
    </source>
</reference>
<comment type="cofactor">
    <cofactor evidence="1">
        <name>Mg(2+)</name>
        <dbReference type="ChEBI" id="CHEBI:18420"/>
    </cofactor>
</comment>
<comment type="subunit">
    <text evidence="1">Monomer.</text>
</comment>
<comment type="similarity">
    <text evidence="3">Belongs to the Nudix hydrolase family. NudJ subfamily.</text>
</comment>
<organism>
    <name type="scientific">Escherichia coli O6:H1 (strain CFT073 / ATCC 700928 / UPEC)</name>
    <dbReference type="NCBI Taxonomy" id="199310"/>
    <lineage>
        <taxon>Bacteria</taxon>
        <taxon>Pseudomonadati</taxon>
        <taxon>Pseudomonadota</taxon>
        <taxon>Gammaproteobacteria</taxon>
        <taxon>Enterobacterales</taxon>
        <taxon>Enterobacteriaceae</taxon>
        <taxon>Escherichia</taxon>
    </lineage>
</organism>
<sequence>MFKPHVTVACVVHAEGKFLVVEETINGKALWNQPAGHLEADETLVEAAARELWEETGISAQPQHFIRMHQWIAPDKTPFLRFLFAIELEQICPTQPHDSDIDCCRWVSAEEILQASNLRSPLVAESIRCYQSGQRYPLEMIGDFNWPFTKGVI</sequence>
<proteinExistence type="inferred from homology"/>